<gene>
    <name evidence="12" type="primary">MCHR1</name>
    <name type="synonym">GPR24</name>
    <name type="synonym">SLC1</name>
</gene>
<accession>Q99705</accession>
<accession>B2RBX6</accession>
<accession>Q5R3J1</accession>
<accession>Q96S47</accession>
<accession>Q9BV08</accession>
<sequence>MDLEASLLPTGPNASNTSDGPDNLTSAGSPPRTGSISYINIIMPSVFGTICLLGIIGNSTVIFAVVKKSKLHWCNNVPDIFIINLSVVDLLFLLGMPFMIHQLMGNGVWHFGETMCTLITAMDANSQFTSTYILTAMAIDRYLATVHPISSTKFRKPSVATLVICLLWALSFISITPVWLYARLIPFPGGAVGCGIRLPNPDTDLYWFTLYQFFLAFALPFVVITAAYVRILQRMTSSVAPASQRSIRLRTKRVTRTAIAICLVFFVCWAPYYVLQLTQLSISRPTLTFVYLYNAAISLGYANSCLNPFVYIVLCETFRKRLVLSVKPAAQGQLRAVSNAQTADEERTESKGT</sequence>
<reference key="1">
    <citation type="journal article" date="1999" name="Biochem. Biophys. Res. Commun.">
        <title>Isolation and identification of melanin-concentrating hormone as the endogenous ligand of the SLC-1 receptor.</title>
        <authorList>
            <person name="Shimomura Y."/>
            <person name="Mori M."/>
            <person name="Sugo T."/>
            <person name="Ishibashi Y."/>
            <person name="Abe M."/>
            <person name="Kurokawa T."/>
            <person name="Onda H."/>
            <person name="Nishimura O."/>
            <person name="Sumino Y."/>
            <person name="Fujino M."/>
        </authorList>
    </citation>
    <scope>NUCLEOTIDE SEQUENCE [MRNA]</scope>
</reference>
<reference key="2">
    <citation type="journal article" date="2005" name="Eur. J. Endocrinol.">
        <title>Mutation analysis of the MCHR1 gene in human obesity.</title>
        <authorList>
            <person name="Wermter A.-K."/>
            <person name="Reichwald K."/>
            <person name="Buech T."/>
            <person name="Geller F."/>
            <person name="Platzer C."/>
            <person name="Huse K."/>
            <person name="Hess C."/>
            <person name="Remschmidt H."/>
            <person name="Gudermann T."/>
            <person name="Preibisch G."/>
            <person name="Siegfried W."/>
            <person name="Goldschmidt H.-P."/>
            <person name="Li W.-D."/>
            <person name="Price R.A."/>
            <person name="Biebermann H."/>
            <person name="Krude H."/>
            <person name="Vollmert C."/>
            <person name="Wichmann H.-E."/>
            <person name="Illig T."/>
            <person name="Soerensen T.I.A."/>
            <person name="Astrup A."/>
            <person name="Larsen L.H."/>
            <person name="Pedersen O."/>
            <person name="Eberle D."/>
            <person name="Clement K."/>
            <person name="Blundell J."/>
            <person name="Wabitsch M."/>
            <person name="Schaefer H."/>
            <person name="Platzer M."/>
            <person name="Hinney A."/>
            <person name="Hebebrand J."/>
        </authorList>
    </citation>
    <scope>NUCLEOTIDE SEQUENCE [MRNA]</scope>
    <scope>VARIANTS HIS-141; MET-236; GLN-248; SER-308 AND MET-342</scope>
</reference>
<reference key="3">
    <citation type="journal article" date="2004" name="Genome Biol.">
        <title>A genome annotation-driven approach to cloning the human ORFeome.</title>
        <authorList>
            <person name="Collins J.E."/>
            <person name="Wright C.L."/>
            <person name="Edwards C.A."/>
            <person name="Davis M.P."/>
            <person name="Grinham J.A."/>
            <person name="Cole C.G."/>
            <person name="Goward M.E."/>
            <person name="Aguado B."/>
            <person name="Mallya M."/>
            <person name="Mokrab Y."/>
            <person name="Huckle E.J."/>
            <person name="Beare D.M."/>
            <person name="Dunham I."/>
        </authorList>
    </citation>
    <scope>NUCLEOTIDE SEQUENCE [LARGE SCALE MRNA]</scope>
</reference>
<reference key="4">
    <citation type="submission" date="2003-05" db="EMBL/GenBank/DDBJ databases">
        <title>Cloning of human full-length CDSs in BD Creator(TM) system donor vector.</title>
        <authorList>
            <person name="Kalnine N."/>
            <person name="Chen X."/>
            <person name="Rolfs A."/>
            <person name="Halleck A."/>
            <person name="Hines L."/>
            <person name="Eisenstein S."/>
            <person name="Koundinya M."/>
            <person name="Raphael J."/>
            <person name="Moreira D."/>
            <person name="Kelley T."/>
            <person name="LaBaer J."/>
            <person name="Lin Y."/>
            <person name="Phelan M."/>
            <person name="Farmer A."/>
        </authorList>
    </citation>
    <scope>NUCLEOTIDE SEQUENCE [LARGE SCALE MRNA]</scope>
</reference>
<reference key="5">
    <citation type="submission" date="2004-03" db="EMBL/GenBank/DDBJ databases">
        <title>cDNA clones of human proteins involved in signal transduction sequenced by the Guthrie cDNA resource center (www.cdna.org).</title>
        <authorList>
            <person name="King M.M."/>
            <person name="Aronstam R.S."/>
            <person name="Sharma S.V."/>
        </authorList>
    </citation>
    <scope>NUCLEOTIDE SEQUENCE [LARGE SCALE MRNA]</scope>
    <source>
        <tissue>Brain</tissue>
    </source>
</reference>
<reference key="6">
    <citation type="journal article" date="2004" name="Nat. Genet.">
        <title>Complete sequencing and characterization of 21,243 full-length human cDNAs.</title>
        <authorList>
            <person name="Ota T."/>
            <person name="Suzuki Y."/>
            <person name="Nishikawa T."/>
            <person name="Otsuki T."/>
            <person name="Sugiyama T."/>
            <person name="Irie R."/>
            <person name="Wakamatsu A."/>
            <person name="Hayashi K."/>
            <person name="Sato H."/>
            <person name="Nagai K."/>
            <person name="Kimura K."/>
            <person name="Makita H."/>
            <person name="Sekine M."/>
            <person name="Obayashi M."/>
            <person name="Nishi T."/>
            <person name="Shibahara T."/>
            <person name="Tanaka T."/>
            <person name="Ishii S."/>
            <person name="Yamamoto J."/>
            <person name="Saito K."/>
            <person name="Kawai Y."/>
            <person name="Isono Y."/>
            <person name="Nakamura Y."/>
            <person name="Nagahari K."/>
            <person name="Murakami K."/>
            <person name="Yasuda T."/>
            <person name="Iwayanagi T."/>
            <person name="Wagatsuma M."/>
            <person name="Shiratori A."/>
            <person name="Sudo H."/>
            <person name="Hosoiri T."/>
            <person name="Kaku Y."/>
            <person name="Kodaira H."/>
            <person name="Kondo H."/>
            <person name="Sugawara M."/>
            <person name="Takahashi M."/>
            <person name="Kanda K."/>
            <person name="Yokoi T."/>
            <person name="Furuya T."/>
            <person name="Kikkawa E."/>
            <person name="Omura Y."/>
            <person name="Abe K."/>
            <person name="Kamihara K."/>
            <person name="Katsuta N."/>
            <person name="Sato K."/>
            <person name="Tanikawa M."/>
            <person name="Yamazaki M."/>
            <person name="Ninomiya K."/>
            <person name="Ishibashi T."/>
            <person name="Yamashita H."/>
            <person name="Murakawa K."/>
            <person name="Fujimori K."/>
            <person name="Tanai H."/>
            <person name="Kimata M."/>
            <person name="Watanabe M."/>
            <person name="Hiraoka S."/>
            <person name="Chiba Y."/>
            <person name="Ishida S."/>
            <person name="Ono Y."/>
            <person name="Takiguchi S."/>
            <person name="Watanabe S."/>
            <person name="Yosida M."/>
            <person name="Hotuta T."/>
            <person name="Kusano J."/>
            <person name="Kanehori K."/>
            <person name="Takahashi-Fujii A."/>
            <person name="Hara H."/>
            <person name="Tanase T.-O."/>
            <person name="Nomura Y."/>
            <person name="Togiya S."/>
            <person name="Komai F."/>
            <person name="Hara R."/>
            <person name="Takeuchi K."/>
            <person name="Arita M."/>
            <person name="Imose N."/>
            <person name="Musashino K."/>
            <person name="Yuuki H."/>
            <person name="Oshima A."/>
            <person name="Sasaki N."/>
            <person name="Aotsuka S."/>
            <person name="Yoshikawa Y."/>
            <person name="Matsunawa H."/>
            <person name="Ichihara T."/>
            <person name="Shiohata N."/>
            <person name="Sano S."/>
            <person name="Moriya S."/>
            <person name="Momiyama H."/>
            <person name="Satoh N."/>
            <person name="Takami S."/>
            <person name="Terashima Y."/>
            <person name="Suzuki O."/>
            <person name="Nakagawa S."/>
            <person name="Senoh A."/>
            <person name="Mizoguchi H."/>
            <person name="Goto Y."/>
            <person name="Shimizu F."/>
            <person name="Wakebe H."/>
            <person name="Hishigaki H."/>
            <person name="Watanabe T."/>
            <person name="Sugiyama A."/>
            <person name="Takemoto M."/>
            <person name="Kawakami B."/>
            <person name="Yamazaki M."/>
            <person name="Watanabe K."/>
            <person name="Kumagai A."/>
            <person name="Itakura S."/>
            <person name="Fukuzumi Y."/>
            <person name="Fujimori Y."/>
            <person name="Komiyama M."/>
            <person name="Tashiro H."/>
            <person name="Tanigami A."/>
            <person name="Fujiwara T."/>
            <person name="Ono T."/>
            <person name="Yamada K."/>
            <person name="Fujii Y."/>
            <person name="Ozaki K."/>
            <person name="Hirao M."/>
            <person name="Ohmori Y."/>
            <person name="Kawabata A."/>
            <person name="Hikiji T."/>
            <person name="Kobatake N."/>
            <person name="Inagaki H."/>
            <person name="Ikema Y."/>
            <person name="Okamoto S."/>
            <person name="Okitani R."/>
            <person name="Kawakami T."/>
            <person name="Noguchi S."/>
            <person name="Itoh T."/>
            <person name="Shigeta K."/>
            <person name="Senba T."/>
            <person name="Matsumura K."/>
            <person name="Nakajima Y."/>
            <person name="Mizuno T."/>
            <person name="Morinaga M."/>
            <person name="Sasaki M."/>
            <person name="Togashi T."/>
            <person name="Oyama M."/>
            <person name="Hata H."/>
            <person name="Watanabe M."/>
            <person name="Komatsu T."/>
            <person name="Mizushima-Sugano J."/>
            <person name="Satoh T."/>
            <person name="Shirai Y."/>
            <person name="Takahashi Y."/>
            <person name="Nakagawa K."/>
            <person name="Okumura K."/>
            <person name="Nagase T."/>
            <person name="Nomura N."/>
            <person name="Kikuchi H."/>
            <person name="Masuho Y."/>
            <person name="Yamashita R."/>
            <person name="Nakai K."/>
            <person name="Yada T."/>
            <person name="Nakamura Y."/>
            <person name="Ohara O."/>
            <person name="Isogai T."/>
            <person name="Sugano S."/>
        </authorList>
    </citation>
    <scope>NUCLEOTIDE SEQUENCE [LARGE SCALE MRNA]</scope>
    <source>
        <tissue>Brain</tissue>
    </source>
</reference>
<reference key="7">
    <citation type="journal article" date="1999" name="Nature">
        <title>The DNA sequence of human chromosome 22.</title>
        <authorList>
            <person name="Dunham I."/>
            <person name="Hunt A.R."/>
            <person name="Collins J.E."/>
            <person name="Bruskiewich R."/>
            <person name="Beare D.M."/>
            <person name="Clamp M."/>
            <person name="Smink L.J."/>
            <person name="Ainscough R."/>
            <person name="Almeida J.P."/>
            <person name="Babbage A.K."/>
            <person name="Bagguley C."/>
            <person name="Bailey J."/>
            <person name="Barlow K.F."/>
            <person name="Bates K.N."/>
            <person name="Beasley O.P."/>
            <person name="Bird C.P."/>
            <person name="Blakey S.E."/>
            <person name="Bridgeman A.M."/>
            <person name="Buck D."/>
            <person name="Burgess J."/>
            <person name="Burrill W.D."/>
            <person name="Burton J."/>
            <person name="Carder C."/>
            <person name="Carter N.P."/>
            <person name="Chen Y."/>
            <person name="Clark G."/>
            <person name="Clegg S.M."/>
            <person name="Cobley V.E."/>
            <person name="Cole C.G."/>
            <person name="Collier R.E."/>
            <person name="Connor R."/>
            <person name="Conroy D."/>
            <person name="Corby N.R."/>
            <person name="Coville G.J."/>
            <person name="Cox A.V."/>
            <person name="Davis J."/>
            <person name="Dawson E."/>
            <person name="Dhami P.D."/>
            <person name="Dockree C."/>
            <person name="Dodsworth S.J."/>
            <person name="Durbin R.M."/>
            <person name="Ellington A.G."/>
            <person name="Evans K.L."/>
            <person name="Fey J.M."/>
            <person name="Fleming K."/>
            <person name="French L."/>
            <person name="Garner A.A."/>
            <person name="Gilbert J.G.R."/>
            <person name="Goward M.E."/>
            <person name="Grafham D.V."/>
            <person name="Griffiths M.N.D."/>
            <person name="Hall C."/>
            <person name="Hall R.E."/>
            <person name="Hall-Tamlyn G."/>
            <person name="Heathcott R.W."/>
            <person name="Ho S."/>
            <person name="Holmes S."/>
            <person name="Hunt S.E."/>
            <person name="Jones M.C."/>
            <person name="Kershaw J."/>
            <person name="Kimberley A.M."/>
            <person name="King A."/>
            <person name="Laird G.K."/>
            <person name="Langford C.F."/>
            <person name="Leversha M.A."/>
            <person name="Lloyd C."/>
            <person name="Lloyd D.M."/>
            <person name="Martyn I.D."/>
            <person name="Mashreghi-Mohammadi M."/>
            <person name="Matthews L.H."/>
            <person name="Mccann O.T."/>
            <person name="Mcclay J."/>
            <person name="Mclaren S."/>
            <person name="McMurray A.A."/>
            <person name="Milne S.A."/>
            <person name="Mortimore B.J."/>
            <person name="Odell C.N."/>
            <person name="Pavitt R."/>
            <person name="Pearce A.V."/>
            <person name="Pearson D."/>
            <person name="Phillimore B.J.C.T."/>
            <person name="Phillips S.H."/>
            <person name="Plumb R.W."/>
            <person name="Ramsay H."/>
            <person name="Ramsey Y."/>
            <person name="Rogers L."/>
            <person name="Ross M.T."/>
            <person name="Scott C.E."/>
            <person name="Sehra H.K."/>
            <person name="Skuce C.D."/>
            <person name="Smalley S."/>
            <person name="Smith M.L."/>
            <person name="Soderlund C."/>
            <person name="Spragon L."/>
            <person name="Steward C.A."/>
            <person name="Sulston J.E."/>
            <person name="Swann R.M."/>
            <person name="Vaudin M."/>
            <person name="Wall M."/>
            <person name="Wallis J.M."/>
            <person name="Whiteley M.N."/>
            <person name="Willey D.L."/>
            <person name="Williams L."/>
            <person name="Williams S.A."/>
            <person name="Williamson H."/>
            <person name="Wilmer T.E."/>
            <person name="Wilming L."/>
            <person name="Wright C.L."/>
            <person name="Hubbard T."/>
            <person name="Bentley D.R."/>
            <person name="Beck S."/>
            <person name="Rogers J."/>
            <person name="Shimizu N."/>
            <person name="Minoshima S."/>
            <person name="Kawasaki K."/>
            <person name="Sasaki T."/>
            <person name="Asakawa S."/>
            <person name="Kudoh J."/>
            <person name="Shintani A."/>
            <person name="Shibuya K."/>
            <person name="Yoshizaki Y."/>
            <person name="Aoki N."/>
            <person name="Mitsuyama S."/>
            <person name="Roe B.A."/>
            <person name="Chen F."/>
            <person name="Chu L."/>
            <person name="Crabtree J."/>
            <person name="Deschamps S."/>
            <person name="Do A."/>
            <person name="Do T."/>
            <person name="Dorman A."/>
            <person name="Fang F."/>
            <person name="Fu Y."/>
            <person name="Hu P."/>
            <person name="Hua A."/>
            <person name="Kenton S."/>
            <person name="Lai H."/>
            <person name="Lao H.I."/>
            <person name="Lewis J."/>
            <person name="Lewis S."/>
            <person name="Lin S.-P."/>
            <person name="Loh P."/>
            <person name="Malaj E."/>
            <person name="Nguyen T."/>
            <person name="Pan H."/>
            <person name="Phan S."/>
            <person name="Qi S."/>
            <person name="Qian Y."/>
            <person name="Ray L."/>
            <person name="Ren Q."/>
            <person name="Shaull S."/>
            <person name="Sloan D."/>
            <person name="Song L."/>
            <person name="Wang Q."/>
            <person name="Wang Y."/>
            <person name="Wang Z."/>
            <person name="White J."/>
            <person name="Willingham D."/>
            <person name="Wu H."/>
            <person name="Yao Z."/>
            <person name="Zhan M."/>
            <person name="Zhang G."/>
            <person name="Chissoe S."/>
            <person name="Murray J."/>
            <person name="Miller N."/>
            <person name="Minx P."/>
            <person name="Fulton R."/>
            <person name="Johnson D."/>
            <person name="Bemis G."/>
            <person name="Bentley D."/>
            <person name="Bradshaw H."/>
            <person name="Bourne S."/>
            <person name="Cordes M."/>
            <person name="Du Z."/>
            <person name="Fulton L."/>
            <person name="Goela D."/>
            <person name="Graves T."/>
            <person name="Hawkins J."/>
            <person name="Hinds K."/>
            <person name="Kemp K."/>
            <person name="Latreille P."/>
            <person name="Layman D."/>
            <person name="Ozersky P."/>
            <person name="Rohlfing T."/>
            <person name="Scheet P."/>
            <person name="Walker C."/>
            <person name="Wamsley A."/>
            <person name="Wohldmann P."/>
            <person name="Pepin K."/>
            <person name="Nelson J."/>
            <person name="Korf I."/>
            <person name="Bedell J.A."/>
            <person name="Hillier L.W."/>
            <person name="Mardis E."/>
            <person name="Waterston R."/>
            <person name="Wilson R."/>
            <person name="Emanuel B.S."/>
            <person name="Shaikh T."/>
            <person name="Kurahashi H."/>
            <person name="Saitta S."/>
            <person name="Budarf M.L."/>
            <person name="McDermid H.E."/>
            <person name="Johnson A."/>
            <person name="Wong A.C.C."/>
            <person name="Morrow B.E."/>
            <person name="Edelmann L."/>
            <person name="Kim U.J."/>
            <person name="Shizuya H."/>
            <person name="Simon M.I."/>
            <person name="Dumanski J.P."/>
            <person name="Peyrard M."/>
            <person name="Kedra D."/>
            <person name="Seroussi E."/>
            <person name="Fransson I."/>
            <person name="Tapia I."/>
            <person name="Bruder C.E."/>
            <person name="O'Brien K.P."/>
            <person name="Wilkinson P."/>
            <person name="Bodenteich A."/>
            <person name="Hartman K."/>
            <person name="Hu X."/>
            <person name="Khan A.S."/>
            <person name="Lane L."/>
            <person name="Tilahun Y."/>
            <person name="Wright H."/>
        </authorList>
    </citation>
    <scope>NUCLEOTIDE SEQUENCE [LARGE SCALE GENOMIC DNA]</scope>
</reference>
<reference key="8">
    <citation type="submission" date="2005-07" db="EMBL/GenBank/DDBJ databases">
        <authorList>
            <person name="Mural R.J."/>
            <person name="Istrail S."/>
            <person name="Sutton G.G."/>
            <person name="Florea L."/>
            <person name="Halpern A.L."/>
            <person name="Mobarry C.M."/>
            <person name="Lippert R."/>
            <person name="Walenz B."/>
            <person name="Shatkay H."/>
            <person name="Dew I."/>
            <person name="Miller J.R."/>
            <person name="Flanigan M.J."/>
            <person name="Edwards N.J."/>
            <person name="Bolanos R."/>
            <person name="Fasulo D."/>
            <person name="Halldorsson B.V."/>
            <person name="Hannenhalli S."/>
            <person name="Turner R."/>
            <person name="Yooseph S."/>
            <person name="Lu F."/>
            <person name="Nusskern D.R."/>
            <person name="Shue B.C."/>
            <person name="Zheng X.H."/>
            <person name="Zhong F."/>
            <person name="Delcher A.L."/>
            <person name="Huson D.H."/>
            <person name="Kravitz S.A."/>
            <person name="Mouchard L."/>
            <person name="Reinert K."/>
            <person name="Remington K.A."/>
            <person name="Clark A.G."/>
            <person name="Waterman M.S."/>
            <person name="Eichler E.E."/>
            <person name="Adams M.D."/>
            <person name="Hunkapiller M.W."/>
            <person name="Myers E.W."/>
            <person name="Venter J.C."/>
        </authorList>
    </citation>
    <scope>NUCLEOTIDE SEQUENCE [LARGE SCALE GENOMIC DNA]</scope>
</reference>
<reference key="9">
    <citation type="journal article" date="2004" name="Genome Res.">
        <title>The status, quality, and expansion of the NIH full-length cDNA project: the Mammalian Gene Collection (MGC).</title>
        <authorList>
            <consortium name="The MGC Project Team"/>
        </authorList>
    </citation>
    <scope>NUCLEOTIDE SEQUENCE [LARGE SCALE MRNA]</scope>
    <source>
        <tissue>Brain</tissue>
    </source>
</reference>
<reference key="10">
    <citation type="journal article" date="1996" name="FEBS Lett.">
        <title>Characterization of a human gene related to genes encoding somatostatin receptors.</title>
        <authorList>
            <person name="Kolakowski L.F. Jr."/>
            <person name="Jung B.P."/>
            <person name="Nguyen T."/>
            <person name="Johnson M.P."/>
            <person name="Lynch K.R."/>
            <person name="Cheng R."/>
            <person name="Heng H.H.Q."/>
            <person name="George S.R."/>
            <person name="O'Dowd B.F."/>
        </authorList>
    </citation>
    <scope>NUCLEOTIDE SEQUENCE [GENOMIC DNA] OF 8-353</scope>
</reference>
<reference key="11">
    <citation type="journal article" date="1999" name="Nature">
        <title>Melanin-concentrating hormone is the cognate ligand for the orphan G-protein-coupled receptor SLC-1.</title>
        <authorList>
            <person name="Chambers J."/>
            <person name="Ames R.S."/>
            <person name="Bergsma D."/>
            <person name="Muir A."/>
            <person name="Fitzgerald L.R."/>
            <person name="Hervieu G."/>
            <person name="Dytko G.M."/>
            <person name="Foley J.J."/>
            <person name="Martin J."/>
            <person name="Liu W.S."/>
            <person name="Park J."/>
            <person name="Ellis C."/>
            <person name="Ganguly S."/>
            <person name="Konchar S."/>
            <person name="Cluderay J."/>
            <person name="Leslie R."/>
            <person name="Wilson S."/>
            <person name="Sarau H.M."/>
        </authorList>
    </citation>
    <scope>FUNCTION</scope>
    <scope>SUBCELLULAR LOCATION</scope>
</reference>
<reference key="12">
    <citation type="journal article" date="2006" name="J. Biol. Chem.">
        <title>Interaction of neurochondrin with the melanin-concentrating hormone receptor 1 interferes with G protein-coupled signal transduction but not agonist-mediated internalization.</title>
        <authorList>
            <person name="Francke F."/>
            <person name="Ward R.J."/>
            <person name="Jenkins L."/>
            <person name="Kellett E."/>
            <person name="Richter D."/>
            <person name="Milligan G."/>
            <person name="Baechner D."/>
        </authorList>
    </citation>
    <scope>INTERACTION WITH NCDN</scope>
</reference>
<reference key="13">
    <citation type="journal article" date="2004" name="Obes. Res.">
        <title>Melanin-concentrating hormone receptor mutations and human obesity: functional analysis.</title>
        <authorList>
            <person name="Gibson W.T."/>
            <person name="Pissios P."/>
            <person name="Trombly D.J."/>
            <person name="Luan J."/>
            <person name="Keogh J."/>
            <person name="Wareham N.J."/>
            <person name="Maratos-Flier E."/>
            <person name="O'Rahilly S."/>
            <person name="Farooqi I.S."/>
        </authorList>
    </citation>
    <scope>VARIANTS HIS-181 AND GLN-248</scope>
</reference>
<reference key="14">
    <citation type="journal article" date="2004" name="Obes. Res.">
        <title>Identification and characterization of single-nucleotide polymorphisms in MCH-R1 and MCH-R2.</title>
        <authorList>
            <person name="Hawes B.E."/>
            <person name="Green B."/>
            <person name="O'Neill K."/>
            <person name="Fried S."/>
            <person name="Arreaza M.G."/>
            <person name="Qiu P."/>
            <person name="Simon J.S."/>
        </authorList>
    </citation>
    <scope>FUNCTION</scope>
    <scope>SUBCELLULAR LOCATION</scope>
</reference>
<organism>
    <name type="scientific">Homo sapiens</name>
    <name type="common">Human</name>
    <dbReference type="NCBI Taxonomy" id="9606"/>
    <lineage>
        <taxon>Eukaryota</taxon>
        <taxon>Metazoa</taxon>
        <taxon>Chordata</taxon>
        <taxon>Craniata</taxon>
        <taxon>Vertebrata</taxon>
        <taxon>Euteleostomi</taxon>
        <taxon>Mammalia</taxon>
        <taxon>Eutheria</taxon>
        <taxon>Euarchontoglires</taxon>
        <taxon>Primates</taxon>
        <taxon>Haplorrhini</taxon>
        <taxon>Catarrhini</taxon>
        <taxon>Hominidae</taxon>
        <taxon>Homo</taxon>
    </lineage>
</organism>
<proteinExistence type="evidence at protein level"/>
<feature type="chain" id="PRO_0000069734" description="Melanin-concentrating hormone receptor 1">
    <location>
        <begin position="1"/>
        <end position="353"/>
    </location>
</feature>
<feature type="topological domain" description="Extracellular" evidence="1">
    <location>
        <begin position="1"/>
        <end position="44"/>
    </location>
</feature>
<feature type="transmembrane region" description="Helical; Name=1" evidence="1">
    <location>
        <begin position="45"/>
        <end position="67"/>
    </location>
</feature>
<feature type="topological domain" description="Cytoplasmic" evidence="1">
    <location>
        <begin position="68"/>
        <end position="79"/>
    </location>
</feature>
<feature type="transmembrane region" description="Helical; Name=2" evidence="1">
    <location>
        <begin position="80"/>
        <end position="102"/>
    </location>
</feature>
<feature type="topological domain" description="Extracellular" evidence="1">
    <location>
        <begin position="103"/>
        <end position="116"/>
    </location>
</feature>
<feature type="transmembrane region" description="Helical; Name=3" evidence="1">
    <location>
        <begin position="117"/>
        <end position="139"/>
    </location>
</feature>
<feature type="topological domain" description="Cytoplasmic" evidence="1">
    <location>
        <begin position="140"/>
        <end position="158"/>
    </location>
</feature>
<feature type="transmembrane region" description="Helical; Name=4" evidence="1">
    <location>
        <begin position="159"/>
        <end position="181"/>
    </location>
</feature>
<feature type="topological domain" description="Extracellular" evidence="1">
    <location>
        <begin position="182"/>
        <end position="209"/>
    </location>
</feature>
<feature type="transmembrane region" description="Helical; Name=5" evidence="1">
    <location>
        <begin position="210"/>
        <end position="232"/>
    </location>
</feature>
<feature type="topological domain" description="Cytoplasmic" evidence="1">
    <location>
        <begin position="233"/>
        <end position="252"/>
    </location>
</feature>
<feature type="transmembrane region" description="Helical; Name=6" evidence="1">
    <location>
        <begin position="253"/>
        <end position="275"/>
    </location>
</feature>
<feature type="topological domain" description="Extracellular" evidence="1">
    <location>
        <begin position="276"/>
        <end position="289"/>
    </location>
</feature>
<feature type="transmembrane region" description="Helical; Name=7" evidence="1">
    <location>
        <begin position="290"/>
        <end position="312"/>
    </location>
</feature>
<feature type="topological domain" description="Cytoplasmic" evidence="1">
    <location>
        <begin position="313"/>
        <end position="353"/>
    </location>
</feature>
<feature type="region of interest" description="Disordered" evidence="3">
    <location>
        <begin position="1"/>
        <end position="29"/>
    </location>
</feature>
<feature type="compositionally biased region" description="Polar residues" evidence="3">
    <location>
        <begin position="12"/>
        <end position="29"/>
    </location>
</feature>
<feature type="glycosylation site" description="N-linked (GlcNAc...) asparagine" evidence="1">
    <location>
        <position position="13"/>
    </location>
</feature>
<feature type="glycosylation site" description="N-linked (GlcNAc...) asparagine" evidence="1">
    <location>
        <position position="16"/>
    </location>
</feature>
<feature type="glycosylation site" description="N-linked (GlcNAc...) asparagine" evidence="1">
    <location>
        <position position="23"/>
    </location>
</feature>
<feature type="disulfide bond" evidence="2">
    <location>
        <begin position="116"/>
        <end position="194"/>
    </location>
</feature>
<feature type="sequence variant" id="VAR_049417" description="In dbSNP:rs11914085.">
    <original>G</original>
    <variation>R</variation>
    <location>
        <position position="34"/>
    </location>
</feature>
<feature type="sequence variant" id="VAR_026655" description="In dbSNP:rs750210146." evidence="7">
    <original>R</original>
    <variation>H</variation>
    <location>
        <position position="141"/>
    </location>
</feature>
<feature type="sequence variant" id="VAR_026656" evidence="5">
    <original>Y</original>
    <variation>H</variation>
    <location>
        <position position="181"/>
    </location>
</feature>
<feature type="sequence variant" id="VAR_026657" description="In dbSNP:rs550313335." evidence="7">
    <original>T</original>
    <variation>M</variation>
    <location>
        <position position="236"/>
    </location>
</feature>
<feature type="sequence variant" id="VAR_026658" description="In dbSNP:rs45439291." evidence="5 7">
    <original>R</original>
    <variation>Q</variation>
    <location>
        <position position="248"/>
    </location>
</feature>
<feature type="sequence variant" id="VAR_026659" description="In dbSNP:rs539260735." evidence="7">
    <original>P</original>
    <variation>S</variation>
    <location>
        <position position="308"/>
    </location>
</feature>
<feature type="sequence variant" id="VAR_026660" description="In dbSNP:rs149604804." evidence="7">
    <original>T</original>
    <variation>M</variation>
    <location>
        <position position="342"/>
    </location>
</feature>
<feature type="helix" evidence="13">
    <location>
        <begin position="39"/>
        <end position="68"/>
    </location>
</feature>
<feature type="strand" evidence="14">
    <location>
        <begin position="69"/>
        <end position="72"/>
    </location>
</feature>
<feature type="helix" evidence="13">
    <location>
        <begin position="77"/>
        <end position="94"/>
    </location>
</feature>
<feature type="helix" evidence="13">
    <location>
        <begin position="96"/>
        <end position="104"/>
    </location>
</feature>
<feature type="strand" evidence="13">
    <location>
        <begin position="105"/>
        <end position="107"/>
    </location>
</feature>
<feature type="helix" evidence="13">
    <location>
        <begin position="112"/>
        <end position="146"/>
    </location>
</feature>
<feature type="helix" evidence="13">
    <location>
        <begin position="150"/>
        <end position="153"/>
    </location>
</feature>
<feature type="helix" evidence="13">
    <location>
        <begin position="157"/>
        <end position="174"/>
    </location>
</feature>
<feature type="helix" evidence="13">
    <location>
        <begin position="176"/>
        <end position="180"/>
    </location>
</feature>
<feature type="strand" evidence="13">
    <location>
        <begin position="181"/>
        <end position="186"/>
    </location>
</feature>
<feature type="strand" evidence="13">
    <location>
        <begin position="188"/>
        <end position="190"/>
    </location>
</feature>
<feature type="strand" evidence="13">
    <location>
        <begin position="192"/>
        <end position="196"/>
    </location>
</feature>
<feature type="helix" evidence="13">
    <location>
        <begin position="201"/>
        <end position="216"/>
    </location>
</feature>
<feature type="helix" evidence="13">
    <location>
        <begin position="218"/>
        <end position="232"/>
    </location>
</feature>
<feature type="strand" evidence="13">
    <location>
        <begin position="234"/>
        <end position="236"/>
    </location>
</feature>
<feature type="strand" evidence="13">
    <location>
        <begin position="238"/>
        <end position="240"/>
    </location>
</feature>
<feature type="helix" evidence="13">
    <location>
        <begin position="245"/>
        <end position="278"/>
    </location>
</feature>
<feature type="turn" evidence="13">
    <location>
        <begin position="279"/>
        <end position="281"/>
    </location>
</feature>
<feature type="helix" evidence="13">
    <location>
        <begin position="287"/>
        <end position="314"/>
    </location>
</feature>
<feature type="helix" evidence="13">
    <location>
        <begin position="316"/>
        <end position="325"/>
    </location>
</feature>
<evidence type="ECO:0000255" key="1"/>
<evidence type="ECO:0000255" key="2">
    <source>
        <dbReference type="PROSITE-ProRule" id="PRU00521"/>
    </source>
</evidence>
<evidence type="ECO:0000256" key="3">
    <source>
        <dbReference type="SAM" id="MobiDB-lite"/>
    </source>
</evidence>
<evidence type="ECO:0000269" key="4">
    <source>
    </source>
</evidence>
<evidence type="ECO:0000269" key="5">
    <source>
    </source>
</evidence>
<evidence type="ECO:0000269" key="6">
    <source>
    </source>
</evidence>
<evidence type="ECO:0000269" key="7">
    <source>
    </source>
</evidence>
<evidence type="ECO:0000269" key="8">
    <source>
    </source>
</evidence>
<evidence type="ECO:0000305" key="9"/>
<evidence type="ECO:0000305" key="10">
    <source>
    </source>
</evidence>
<evidence type="ECO:0000305" key="11">
    <source>
    </source>
</evidence>
<evidence type="ECO:0000312" key="12">
    <source>
        <dbReference type="HGNC" id="HGNC:4479"/>
    </source>
</evidence>
<evidence type="ECO:0007829" key="13">
    <source>
        <dbReference type="PDB" id="8WWK"/>
    </source>
</evidence>
<evidence type="ECO:0007829" key="14">
    <source>
        <dbReference type="PDB" id="8WWM"/>
    </source>
</evidence>
<name>MCHR1_HUMAN</name>
<dbReference type="EMBL" id="AB063174">
    <property type="protein sequence ID" value="BAB60890.1"/>
    <property type="status" value="ALT_INIT"/>
    <property type="molecule type" value="mRNA"/>
</dbReference>
<dbReference type="EMBL" id="AF490537">
    <property type="protein sequence ID" value="AAO14670.1"/>
    <property type="status" value="ALT_INIT"/>
    <property type="molecule type" value="mRNA"/>
</dbReference>
<dbReference type="EMBL" id="CR456497">
    <property type="protein sequence ID" value="CAG30383.1"/>
    <property type="status" value="ALT_INIT"/>
    <property type="molecule type" value="mRNA"/>
</dbReference>
<dbReference type="EMBL" id="BT006725">
    <property type="protein sequence ID" value="AAP35371.1"/>
    <property type="status" value="ALT_INIT"/>
    <property type="molecule type" value="mRNA"/>
</dbReference>
<dbReference type="EMBL" id="AY562945">
    <property type="protein sequence ID" value="AAS72373.1"/>
    <property type="status" value="ALT_INIT"/>
    <property type="molecule type" value="mRNA"/>
</dbReference>
<dbReference type="EMBL" id="AK314857">
    <property type="protein sequence ID" value="BAG37373.1"/>
    <property type="status" value="ALT_INIT"/>
    <property type="molecule type" value="mRNA"/>
</dbReference>
<dbReference type="EMBL" id="Z86090">
    <property type="status" value="NOT_ANNOTATED_CDS"/>
    <property type="molecule type" value="Genomic_DNA"/>
</dbReference>
<dbReference type="EMBL" id="CH471095">
    <property type="protein sequence ID" value="EAW60388.1"/>
    <property type="status" value="ALT_INIT"/>
    <property type="molecule type" value="Genomic_DNA"/>
</dbReference>
<dbReference type="EMBL" id="BC001736">
    <property type="protein sequence ID" value="AAH01736.1"/>
    <property type="status" value="ALT_INIT"/>
    <property type="molecule type" value="mRNA"/>
</dbReference>
<dbReference type="EMBL" id="BC021146">
    <property type="protein sequence ID" value="AAH21146.1"/>
    <property type="status" value="ALT_INIT"/>
    <property type="molecule type" value="mRNA"/>
</dbReference>
<dbReference type="EMBL" id="U71092">
    <property type="protein sequence ID" value="AAC14587.1"/>
    <property type="status" value="ALT_SEQ"/>
    <property type="molecule type" value="Genomic_DNA"/>
</dbReference>
<dbReference type="CCDS" id="CCDS14004.2"/>
<dbReference type="PIR" id="JC7080">
    <property type="entry name" value="JC7080"/>
</dbReference>
<dbReference type="RefSeq" id="NP_005288.3">
    <property type="nucleotide sequence ID" value="NM_005297.3"/>
</dbReference>
<dbReference type="PDB" id="8WSS">
    <property type="method" value="EM"/>
    <property type="resolution" value="3.01 A"/>
    <property type="chains" value="R=1-336"/>
</dbReference>
<dbReference type="PDB" id="8WWH">
    <property type="method" value="EM"/>
    <property type="resolution" value="2.84 A"/>
    <property type="chains" value="R=1-327"/>
</dbReference>
<dbReference type="PDB" id="8WWI">
    <property type="method" value="EM"/>
    <property type="resolution" value="3.43 A"/>
    <property type="chains" value="R=1-327"/>
</dbReference>
<dbReference type="PDB" id="8WWJ">
    <property type="method" value="EM"/>
    <property type="resolution" value="3.03 A"/>
    <property type="chains" value="R=1-327"/>
</dbReference>
<dbReference type="PDB" id="8WWK">
    <property type="method" value="EM"/>
    <property type="resolution" value="2.61 A"/>
    <property type="chains" value="R=1-327"/>
</dbReference>
<dbReference type="PDB" id="8WWL">
    <property type="method" value="EM"/>
    <property type="resolution" value="2.78 A"/>
    <property type="chains" value="R=1-327"/>
</dbReference>
<dbReference type="PDB" id="8WWM">
    <property type="method" value="EM"/>
    <property type="resolution" value="2.81 A"/>
    <property type="chains" value="R=1-327"/>
</dbReference>
<dbReference type="PDB" id="8WWN">
    <property type="method" value="EM"/>
    <property type="resolution" value="2.65 A"/>
    <property type="chains" value="R=1-327"/>
</dbReference>
<dbReference type="PDB" id="8YNT">
    <property type="method" value="EM"/>
    <property type="resolution" value="3.43 A"/>
    <property type="chains" value="R=247-327"/>
</dbReference>
<dbReference type="PDBsum" id="8WSS"/>
<dbReference type="PDBsum" id="8WWH"/>
<dbReference type="PDBsum" id="8WWI"/>
<dbReference type="PDBsum" id="8WWJ"/>
<dbReference type="PDBsum" id="8WWK"/>
<dbReference type="PDBsum" id="8WWL"/>
<dbReference type="PDBsum" id="8WWM"/>
<dbReference type="PDBsum" id="8WWN"/>
<dbReference type="PDBsum" id="8YNT"/>
<dbReference type="EMDB" id="EMD-37823"/>
<dbReference type="EMDB" id="EMD-37888"/>
<dbReference type="EMDB" id="EMD-37889"/>
<dbReference type="EMDB" id="EMD-37890"/>
<dbReference type="EMDB" id="EMD-37891"/>
<dbReference type="EMDB" id="EMD-37892"/>
<dbReference type="EMDB" id="EMD-37893"/>
<dbReference type="EMDB" id="EMD-37894"/>
<dbReference type="EMDB" id="EMD-39429"/>
<dbReference type="EMDB" id="EMD-39430"/>
<dbReference type="SMR" id="Q99705"/>
<dbReference type="BioGRID" id="109106">
    <property type="interactions" value="1"/>
</dbReference>
<dbReference type="FunCoup" id="Q99705">
    <property type="interactions" value="612"/>
</dbReference>
<dbReference type="IntAct" id="Q99705">
    <property type="interactions" value="1"/>
</dbReference>
<dbReference type="STRING" id="9606.ENSP00000249016"/>
<dbReference type="BindingDB" id="Q99705"/>
<dbReference type="ChEMBL" id="CHEMBL344"/>
<dbReference type="DrugBank" id="DB14787">
    <property type="generic name" value="BMS-830216"/>
</dbReference>
<dbReference type="DrugBank" id="DB00502">
    <property type="generic name" value="Haloperidol"/>
</dbReference>
<dbReference type="DrugBank" id="DB06027">
    <property type="generic name" value="NGD-4715"/>
</dbReference>
<dbReference type="GuidetoPHARMACOLOGY" id="280"/>
<dbReference type="TCDB" id="9.A.14.13.6">
    <property type="family name" value="the g-protein-coupled receptor (gpcr) family"/>
</dbReference>
<dbReference type="GlyCosmos" id="Q99705">
    <property type="glycosylation" value="3 sites, No reported glycans"/>
</dbReference>
<dbReference type="GlyGen" id="Q99705">
    <property type="glycosylation" value="3 sites"/>
</dbReference>
<dbReference type="PhosphoSitePlus" id="Q99705"/>
<dbReference type="BioMuta" id="MCHR1"/>
<dbReference type="DMDM" id="33860175"/>
<dbReference type="MassIVE" id="Q99705"/>
<dbReference type="PaxDb" id="9606-ENSP00000249016"/>
<dbReference type="PeptideAtlas" id="Q99705"/>
<dbReference type="Antibodypedia" id="300">
    <property type="antibodies" value="320 antibodies from 33 providers"/>
</dbReference>
<dbReference type="DNASU" id="2847"/>
<dbReference type="Ensembl" id="ENST00000249016.5">
    <property type="protein sequence ID" value="ENSP00000249016.5"/>
    <property type="gene ID" value="ENSG00000128285.5"/>
</dbReference>
<dbReference type="GeneID" id="2847"/>
<dbReference type="KEGG" id="hsa:2847"/>
<dbReference type="MANE-Select" id="ENST00000249016.5">
    <property type="protein sequence ID" value="ENSP00000249016.5"/>
    <property type="RefSeq nucleotide sequence ID" value="NM_005297.4"/>
    <property type="RefSeq protein sequence ID" value="NP_005288.4"/>
</dbReference>
<dbReference type="UCSC" id="uc003ayz.4">
    <property type="organism name" value="human"/>
</dbReference>
<dbReference type="AGR" id="HGNC:4479"/>
<dbReference type="CTD" id="2847"/>
<dbReference type="DisGeNET" id="2847"/>
<dbReference type="GeneCards" id="MCHR1"/>
<dbReference type="HGNC" id="HGNC:4479">
    <property type="gene designation" value="MCHR1"/>
</dbReference>
<dbReference type="HPA" id="ENSG00000128285">
    <property type="expression patterns" value="Tissue enhanced (brain, ovary)"/>
</dbReference>
<dbReference type="MIM" id="601751">
    <property type="type" value="gene"/>
</dbReference>
<dbReference type="neXtProt" id="NX_Q99705"/>
<dbReference type="OpenTargets" id="ENSG00000128285"/>
<dbReference type="PharmGKB" id="PA28867"/>
<dbReference type="VEuPathDB" id="HostDB:ENSG00000128285"/>
<dbReference type="eggNOG" id="KOG3656">
    <property type="taxonomic scope" value="Eukaryota"/>
</dbReference>
<dbReference type="GeneTree" id="ENSGT00940000154272"/>
<dbReference type="HOGENOM" id="CLU_009579_8_1_1"/>
<dbReference type="InParanoid" id="Q99705"/>
<dbReference type="OrthoDB" id="6076970at2759"/>
<dbReference type="PAN-GO" id="Q99705">
    <property type="GO annotations" value="5 GO annotations based on evolutionary models"/>
</dbReference>
<dbReference type="PhylomeDB" id="Q99705"/>
<dbReference type="TreeFam" id="TF315737"/>
<dbReference type="PathwayCommons" id="Q99705"/>
<dbReference type="Reactome" id="R-HSA-375276">
    <property type="pathway name" value="Peptide ligand-binding receptors"/>
</dbReference>
<dbReference type="Reactome" id="R-HSA-416476">
    <property type="pathway name" value="G alpha (q) signalling events"/>
</dbReference>
<dbReference type="Reactome" id="R-HSA-418594">
    <property type="pathway name" value="G alpha (i) signalling events"/>
</dbReference>
<dbReference type="Reactome" id="R-HSA-5620922">
    <property type="pathway name" value="BBSome-mediated cargo-targeting to cilium"/>
</dbReference>
<dbReference type="SignaLink" id="Q99705"/>
<dbReference type="SIGNOR" id="Q99705"/>
<dbReference type="BioGRID-ORCS" id="2847">
    <property type="hits" value="11 hits in 1140 CRISPR screens"/>
</dbReference>
<dbReference type="ChiTaRS" id="MCHR1">
    <property type="organism name" value="human"/>
</dbReference>
<dbReference type="GeneWiki" id="Melanin-concentrating_hormone_receptor_1"/>
<dbReference type="GenomeRNAi" id="2847"/>
<dbReference type="Pharos" id="Q99705">
    <property type="development level" value="Tchem"/>
</dbReference>
<dbReference type="PRO" id="PR:Q99705"/>
<dbReference type="Proteomes" id="UP000005640">
    <property type="component" value="Chromosome 22"/>
</dbReference>
<dbReference type="RNAct" id="Q99705">
    <property type="molecule type" value="protein"/>
</dbReference>
<dbReference type="Bgee" id="ENSG00000128285">
    <property type="expression patterns" value="Expressed in endothelial cell and 114 other cell types or tissues"/>
</dbReference>
<dbReference type="ExpressionAtlas" id="Q99705">
    <property type="expression patterns" value="baseline and differential"/>
</dbReference>
<dbReference type="GO" id="GO:0060170">
    <property type="term" value="C:ciliary membrane"/>
    <property type="evidence" value="ECO:0007669"/>
    <property type="project" value="Ensembl"/>
</dbReference>
<dbReference type="GO" id="GO:0005929">
    <property type="term" value="C:cilium"/>
    <property type="evidence" value="ECO:0000314"/>
    <property type="project" value="MGI"/>
</dbReference>
<dbReference type="GO" id="GO:0043005">
    <property type="term" value="C:neuron projection"/>
    <property type="evidence" value="ECO:0000318"/>
    <property type="project" value="GO_Central"/>
</dbReference>
<dbReference type="GO" id="GO:0097730">
    <property type="term" value="C:non-motile cilium"/>
    <property type="evidence" value="ECO:0000250"/>
    <property type="project" value="BHF-UCL"/>
</dbReference>
<dbReference type="GO" id="GO:0005886">
    <property type="term" value="C:plasma membrane"/>
    <property type="evidence" value="ECO:0000318"/>
    <property type="project" value="GO_Central"/>
</dbReference>
<dbReference type="GO" id="GO:0004930">
    <property type="term" value="F:G protein-coupled receptor activity"/>
    <property type="evidence" value="ECO:0000318"/>
    <property type="project" value="GO_Central"/>
</dbReference>
<dbReference type="GO" id="GO:0042562">
    <property type="term" value="F:hormone binding"/>
    <property type="evidence" value="ECO:0007669"/>
    <property type="project" value="Ensembl"/>
</dbReference>
<dbReference type="GO" id="GO:0030273">
    <property type="term" value="F:melanin-concentrating hormone receptor activity"/>
    <property type="evidence" value="ECO:0007669"/>
    <property type="project" value="Ensembl"/>
</dbReference>
<dbReference type="GO" id="GO:0042923">
    <property type="term" value="F:neuropeptide binding"/>
    <property type="evidence" value="ECO:0000318"/>
    <property type="project" value="GO_Central"/>
</dbReference>
<dbReference type="GO" id="GO:0008188">
    <property type="term" value="F:neuropeptide receptor activity"/>
    <property type="evidence" value="ECO:0000304"/>
    <property type="project" value="ProtInc"/>
</dbReference>
<dbReference type="GO" id="GO:0005102">
    <property type="term" value="F:signaling receptor binding"/>
    <property type="evidence" value="ECO:0007669"/>
    <property type="project" value="Ensembl"/>
</dbReference>
<dbReference type="GO" id="GO:0007193">
    <property type="term" value="P:adenylate cyclase-inhibiting G protein-coupled receptor signaling pathway"/>
    <property type="evidence" value="ECO:0000304"/>
    <property type="project" value="ProtInc"/>
</dbReference>
<dbReference type="GO" id="GO:0007166">
    <property type="term" value="P:cell surface receptor signaling pathway"/>
    <property type="evidence" value="ECO:0007669"/>
    <property type="project" value="Ensembl"/>
</dbReference>
<dbReference type="GO" id="GO:0007631">
    <property type="term" value="P:feeding behavior"/>
    <property type="evidence" value="ECO:0000304"/>
    <property type="project" value="ProtInc"/>
</dbReference>
<dbReference type="GO" id="GO:0007186">
    <property type="term" value="P:G protein-coupled receptor signaling pathway"/>
    <property type="evidence" value="ECO:0000304"/>
    <property type="project" value="ProtInc"/>
</dbReference>
<dbReference type="GO" id="GO:0006091">
    <property type="term" value="P:generation of precursor metabolites and energy"/>
    <property type="evidence" value="ECO:0000304"/>
    <property type="project" value="ProtInc"/>
</dbReference>
<dbReference type="GO" id="GO:0007218">
    <property type="term" value="P:neuropeptide signaling pathway"/>
    <property type="evidence" value="ECO:0000318"/>
    <property type="project" value="GO_Central"/>
</dbReference>
<dbReference type="GO" id="GO:0051928">
    <property type="term" value="P:positive regulation of calcium ion transport"/>
    <property type="evidence" value="ECO:0007669"/>
    <property type="project" value="Ensembl"/>
</dbReference>
<dbReference type="GO" id="GO:0007204">
    <property type="term" value="P:positive regulation of cytosolic calcium ion concentration"/>
    <property type="evidence" value="ECO:0000304"/>
    <property type="project" value="ProtInc"/>
</dbReference>
<dbReference type="CDD" id="cd15338">
    <property type="entry name" value="7tmA_MCHR1"/>
    <property type="match status" value="1"/>
</dbReference>
<dbReference type="FunFam" id="1.20.1070.10:FF:000115">
    <property type="entry name" value="Melanin-concentrating hormone receptor 1"/>
    <property type="match status" value="1"/>
</dbReference>
<dbReference type="Gene3D" id="1.20.1070.10">
    <property type="entry name" value="Rhodopsin 7-helix transmembrane proteins"/>
    <property type="match status" value="1"/>
</dbReference>
<dbReference type="InterPro" id="IPR000276">
    <property type="entry name" value="GPCR_Rhodpsn"/>
</dbReference>
<dbReference type="InterPro" id="IPR017452">
    <property type="entry name" value="GPCR_Rhodpsn_7TM"/>
</dbReference>
<dbReference type="InterPro" id="IPR008361">
    <property type="entry name" value="MCH_rcpt"/>
</dbReference>
<dbReference type="InterPro" id="IPR004047">
    <property type="entry name" value="MCHR1"/>
</dbReference>
<dbReference type="PANTHER" id="PTHR24229:SF91">
    <property type="entry name" value="MELANIN-CONCENTRATING HORMONE RECEPTOR 1"/>
    <property type="match status" value="1"/>
</dbReference>
<dbReference type="PANTHER" id="PTHR24229">
    <property type="entry name" value="NEUROPEPTIDES RECEPTOR"/>
    <property type="match status" value="1"/>
</dbReference>
<dbReference type="Pfam" id="PF00001">
    <property type="entry name" value="7tm_1"/>
    <property type="match status" value="1"/>
</dbReference>
<dbReference type="PRINTS" id="PR00237">
    <property type="entry name" value="GPCRRHODOPSN"/>
</dbReference>
<dbReference type="PRINTS" id="PR01507">
    <property type="entry name" value="MCH1RECEPTOR"/>
</dbReference>
<dbReference type="PRINTS" id="PR01783">
    <property type="entry name" value="MCHRECEPTOR"/>
</dbReference>
<dbReference type="SUPFAM" id="SSF81321">
    <property type="entry name" value="Family A G protein-coupled receptor-like"/>
    <property type="match status" value="1"/>
</dbReference>
<dbReference type="PROSITE" id="PS50262">
    <property type="entry name" value="G_PROTEIN_RECEP_F1_2"/>
    <property type="match status" value="1"/>
</dbReference>
<keyword id="KW-0002">3D-structure</keyword>
<keyword id="KW-1003">Cell membrane</keyword>
<keyword id="KW-1015">Disulfide bond</keyword>
<keyword id="KW-0297">G-protein coupled receptor</keyword>
<keyword id="KW-0325">Glycoprotein</keyword>
<keyword id="KW-0472">Membrane</keyword>
<keyword id="KW-1267">Proteomics identification</keyword>
<keyword id="KW-0675">Receptor</keyword>
<keyword id="KW-1185">Reference proteome</keyword>
<keyword id="KW-0807">Transducer</keyword>
<keyword id="KW-0812">Transmembrane</keyword>
<keyword id="KW-1133">Transmembrane helix</keyword>
<comment type="function">
    <text evidence="4 6">Receptor for melanin-concentrating hormone, coupled to both G proteins that inhibit adenylyl cyclase and G proteins that activate phosphoinositide hydrolysis.</text>
</comment>
<comment type="subunit">
    <text evidence="8">Interacts with NCDN.</text>
</comment>
<comment type="subcellular location">
    <subcellularLocation>
        <location evidence="10 11">Cell membrane</location>
        <topology evidence="1">Multi-pass membrane protein</topology>
    </subcellularLocation>
</comment>
<comment type="tissue specificity">
    <text>Highest level in brain, particularly in the frontal cortex and hypothalamus, lower levels in the liver and heart.</text>
</comment>
<comment type="similarity">
    <text evidence="2">Belongs to the G-protein coupled receptor 1 family.</text>
</comment>
<comment type="sequence caution" evidence="9">
    <conflict type="erroneous gene model prediction">
        <sequence resource="EMBL-CDS" id="AAC14587"/>
    </conflict>
</comment>
<comment type="sequence caution" evidence="9">
    <conflict type="erroneous initiation">
        <sequence resource="EMBL-CDS" id="AAH01736"/>
    </conflict>
    <text>Extended N-terminus.</text>
</comment>
<comment type="sequence caution" evidence="9">
    <conflict type="erroneous initiation">
        <sequence resource="EMBL-CDS" id="AAH21146"/>
    </conflict>
    <text>Extended N-terminus.</text>
</comment>
<comment type="sequence caution" evidence="9">
    <conflict type="erroneous initiation">
        <sequence resource="EMBL-CDS" id="AAO14670"/>
    </conflict>
    <text>Extended N-terminus.</text>
</comment>
<comment type="sequence caution" evidence="9">
    <conflict type="erroneous initiation">
        <sequence resource="EMBL-CDS" id="AAP35371"/>
    </conflict>
    <text>Extended N-terminus.</text>
</comment>
<comment type="sequence caution" evidence="9">
    <conflict type="erroneous initiation">
        <sequence resource="EMBL-CDS" id="AAS72373"/>
    </conflict>
    <text>Extended N-terminus.</text>
</comment>
<comment type="sequence caution" evidence="9">
    <conflict type="erroneous initiation">
        <sequence resource="EMBL-CDS" id="BAB60890"/>
    </conflict>
    <text>Extended N-terminus.</text>
</comment>
<comment type="sequence caution" evidence="9">
    <conflict type="erroneous initiation">
        <sequence resource="EMBL-CDS" id="BAG37373"/>
    </conflict>
    <text>Extended N-terminus.</text>
</comment>
<comment type="sequence caution" evidence="9">
    <conflict type="erroneous initiation">
        <sequence resource="EMBL-CDS" id="CAG30383"/>
    </conflict>
    <text>Extended N-terminus.</text>
</comment>
<comment type="sequence caution" evidence="9">
    <conflict type="erroneous initiation">
        <sequence resource="EMBL-CDS" id="EAW60388"/>
    </conflict>
    <text>Extended N-terminus.</text>
</comment>
<protein>
    <recommendedName>
        <fullName evidence="10">Melanin-concentrating hormone receptor 1</fullName>
        <shortName>MCH receptor 1</shortName>
        <shortName>MCH-R1</shortName>
        <shortName>MCHR-1</shortName>
    </recommendedName>
    <alternativeName>
        <fullName>G-protein coupled receptor 24</fullName>
    </alternativeName>
    <alternativeName>
        <fullName>MCH-1R</fullName>
        <shortName>MCH1R</shortName>
        <shortName>MCHR</shortName>
    </alternativeName>
    <alternativeName>
        <fullName>SLC-1</fullName>
    </alternativeName>
    <alternativeName>
        <fullName>Somatostatin receptor-like protein</fullName>
    </alternativeName>
</protein>